<organism>
    <name type="scientific">Marinomonas sp. (strain MWYL1)</name>
    <dbReference type="NCBI Taxonomy" id="400668"/>
    <lineage>
        <taxon>Bacteria</taxon>
        <taxon>Pseudomonadati</taxon>
        <taxon>Pseudomonadota</taxon>
        <taxon>Gammaproteobacteria</taxon>
        <taxon>Oceanospirillales</taxon>
        <taxon>Oceanospirillaceae</taxon>
        <taxon>Marinomonas</taxon>
    </lineage>
</organism>
<feature type="chain" id="PRO_1000076457" description="Phosphoribosylaminoimidazole-succinocarboxamide synthase">
    <location>
        <begin position="1"/>
        <end position="238"/>
    </location>
</feature>
<reference key="1">
    <citation type="submission" date="2007-06" db="EMBL/GenBank/DDBJ databases">
        <title>Complete sequence of Marinomonas sp. MWYL1.</title>
        <authorList>
            <consortium name="US DOE Joint Genome Institute"/>
            <person name="Copeland A."/>
            <person name="Lucas S."/>
            <person name="Lapidus A."/>
            <person name="Barry K."/>
            <person name="Glavina del Rio T."/>
            <person name="Dalin E."/>
            <person name="Tice H."/>
            <person name="Pitluck S."/>
            <person name="Kiss H."/>
            <person name="Brettin T."/>
            <person name="Bruce D."/>
            <person name="Detter J.C."/>
            <person name="Han C."/>
            <person name="Schmutz J."/>
            <person name="Larimer F."/>
            <person name="Land M."/>
            <person name="Hauser L."/>
            <person name="Kyrpides N."/>
            <person name="Kim E."/>
            <person name="Johnston A.W.B."/>
            <person name="Todd J.D."/>
            <person name="Rogers R."/>
            <person name="Wexler M."/>
            <person name="Bond P.L."/>
            <person name="Li Y."/>
            <person name="Richardson P."/>
        </authorList>
    </citation>
    <scope>NUCLEOTIDE SEQUENCE [LARGE SCALE GENOMIC DNA]</scope>
    <source>
        <strain>MWYL1</strain>
    </source>
</reference>
<accession>A6VX88</accession>
<comment type="catalytic activity">
    <reaction evidence="1">
        <text>5-amino-1-(5-phospho-D-ribosyl)imidazole-4-carboxylate + L-aspartate + ATP = (2S)-2-[5-amino-1-(5-phospho-beta-D-ribosyl)imidazole-4-carboxamido]succinate + ADP + phosphate + 2 H(+)</text>
        <dbReference type="Rhea" id="RHEA:22628"/>
        <dbReference type="ChEBI" id="CHEBI:15378"/>
        <dbReference type="ChEBI" id="CHEBI:29991"/>
        <dbReference type="ChEBI" id="CHEBI:30616"/>
        <dbReference type="ChEBI" id="CHEBI:43474"/>
        <dbReference type="ChEBI" id="CHEBI:58443"/>
        <dbReference type="ChEBI" id="CHEBI:77657"/>
        <dbReference type="ChEBI" id="CHEBI:456216"/>
        <dbReference type="EC" id="6.3.2.6"/>
    </reaction>
</comment>
<comment type="pathway">
    <text evidence="1">Purine metabolism; IMP biosynthesis via de novo pathway; 5-amino-1-(5-phospho-D-ribosyl)imidazole-4-carboxamide from 5-amino-1-(5-phospho-D-ribosyl)imidazole-4-carboxylate: step 1/2.</text>
</comment>
<comment type="similarity">
    <text evidence="1">Belongs to the SAICAR synthetase family.</text>
</comment>
<evidence type="ECO:0000255" key="1">
    <source>
        <dbReference type="HAMAP-Rule" id="MF_00137"/>
    </source>
</evidence>
<protein>
    <recommendedName>
        <fullName evidence="1">Phosphoribosylaminoimidazole-succinocarboxamide synthase</fullName>
        <ecNumber evidence="1">6.3.2.6</ecNumber>
    </recommendedName>
    <alternativeName>
        <fullName evidence="1">SAICAR synthetase</fullName>
    </alternativeName>
</protein>
<gene>
    <name evidence="1" type="primary">purC</name>
    <name type="ordered locus">Mmwyl1_2145</name>
</gene>
<keyword id="KW-0067">ATP-binding</keyword>
<keyword id="KW-0436">Ligase</keyword>
<keyword id="KW-0547">Nucleotide-binding</keyword>
<keyword id="KW-0658">Purine biosynthesis</keyword>
<name>PUR7_MARMS</name>
<dbReference type="EC" id="6.3.2.6" evidence="1"/>
<dbReference type="EMBL" id="CP000749">
    <property type="protein sequence ID" value="ABR71067.1"/>
    <property type="molecule type" value="Genomic_DNA"/>
</dbReference>
<dbReference type="SMR" id="A6VX88"/>
<dbReference type="STRING" id="400668.Mmwyl1_2145"/>
<dbReference type="KEGG" id="mmw:Mmwyl1_2145"/>
<dbReference type="eggNOG" id="COG0152">
    <property type="taxonomic scope" value="Bacteria"/>
</dbReference>
<dbReference type="HOGENOM" id="CLU_061495_2_0_6"/>
<dbReference type="OrthoDB" id="9801549at2"/>
<dbReference type="UniPathway" id="UPA00074">
    <property type="reaction ID" value="UER00131"/>
</dbReference>
<dbReference type="GO" id="GO:0005829">
    <property type="term" value="C:cytosol"/>
    <property type="evidence" value="ECO:0007669"/>
    <property type="project" value="TreeGrafter"/>
</dbReference>
<dbReference type="GO" id="GO:0005524">
    <property type="term" value="F:ATP binding"/>
    <property type="evidence" value="ECO:0007669"/>
    <property type="project" value="UniProtKB-KW"/>
</dbReference>
<dbReference type="GO" id="GO:0004639">
    <property type="term" value="F:phosphoribosylaminoimidazolesuccinocarboxamide synthase activity"/>
    <property type="evidence" value="ECO:0007669"/>
    <property type="project" value="UniProtKB-UniRule"/>
</dbReference>
<dbReference type="GO" id="GO:0006189">
    <property type="term" value="P:'de novo' IMP biosynthetic process"/>
    <property type="evidence" value="ECO:0007669"/>
    <property type="project" value="UniProtKB-UniRule"/>
</dbReference>
<dbReference type="GO" id="GO:0009236">
    <property type="term" value="P:cobalamin biosynthetic process"/>
    <property type="evidence" value="ECO:0007669"/>
    <property type="project" value="InterPro"/>
</dbReference>
<dbReference type="CDD" id="cd01415">
    <property type="entry name" value="SAICAR_synt_PurC"/>
    <property type="match status" value="1"/>
</dbReference>
<dbReference type="FunFam" id="3.30.200.20:FF:000086">
    <property type="entry name" value="Phosphoribosylaminoimidazole-succinocarboxamide synthase"/>
    <property type="match status" value="1"/>
</dbReference>
<dbReference type="FunFam" id="3.30.470.20:FF:000006">
    <property type="entry name" value="Phosphoribosylaminoimidazole-succinocarboxamide synthase"/>
    <property type="match status" value="1"/>
</dbReference>
<dbReference type="Gene3D" id="3.30.470.20">
    <property type="entry name" value="ATP-grasp fold, B domain"/>
    <property type="match status" value="1"/>
</dbReference>
<dbReference type="Gene3D" id="3.30.200.20">
    <property type="entry name" value="Phosphorylase Kinase, domain 1"/>
    <property type="match status" value="1"/>
</dbReference>
<dbReference type="HAMAP" id="MF_00137">
    <property type="entry name" value="SAICAR_synth"/>
    <property type="match status" value="1"/>
</dbReference>
<dbReference type="InterPro" id="IPR028923">
    <property type="entry name" value="SAICAR_synt/ADE2_N"/>
</dbReference>
<dbReference type="InterPro" id="IPR033934">
    <property type="entry name" value="SAICAR_synt_PurC"/>
</dbReference>
<dbReference type="InterPro" id="IPR001636">
    <property type="entry name" value="SAICAR_synth"/>
</dbReference>
<dbReference type="InterPro" id="IPR050089">
    <property type="entry name" value="SAICAR_synthetase"/>
</dbReference>
<dbReference type="InterPro" id="IPR018236">
    <property type="entry name" value="SAICAR_synthetase_CS"/>
</dbReference>
<dbReference type="NCBIfam" id="TIGR00081">
    <property type="entry name" value="purC"/>
    <property type="match status" value="1"/>
</dbReference>
<dbReference type="PANTHER" id="PTHR43599">
    <property type="entry name" value="MULTIFUNCTIONAL PROTEIN ADE2"/>
    <property type="match status" value="1"/>
</dbReference>
<dbReference type="PANTHER" id="PTHR43599:SF3">
    <property type="entry name" value="SI:DKEY-6E2.2"/>
    <property type="match status" value="1"/>
</dbReference>
<dbReference type="Pfam" id="PF01259">
    <property type="entry name" value="SAICAR_synt"/>
    <property type="match status" value="1"/>
</dbReference>
<dbReference type="SUPFAM" id="SSF56104">
    <property type="entry name" value="SAICAR synthase-like"/>
    <property type="match status" value="1"/>
</dbReference>
<dbReference type="PROSITE" id="PS01057">
    <property type="entry name" value="SAICAR_SYNTHETASE_1"/>
    <property type="match status" value="1"/>
</dbReference>
<dbReference type="PROSITE" id="PS01058">
    <property type="entry name" value="SAICAR_SYNTHETASE_2"/>
    <property type="match status" value="1"/>
</dbReference>
<proteinExistence type="inferred from homology"/>
<sequence length="238" mass="26715">MEKRQELYAGKAKSVFRTDDPDKMVLVFRDDTSAFDGKRIEQLDRKGMVNNKFNAFIMTKLQEAGIPTHFEKLLSDTESLVKCLDMIPVECVVRNVAAGSLCRRLGVEEGITLTPPTFELFLKNDALGDPMINESHVESFGWAKASDLAKAKELTFKVNDVLKAIFAEGGMILVDYKLEFGLYKGEVLLGDEFSPDGCRLWDAKTKEKLDKDRFRQGLGGVIEAYEDVGRRIGIDFDA</sequence>